<reference key="1">
    <citation type="journal article" date="1999" name="Nature">
        <title>Sequence and analysis of chromosome 2 of the plant Arabidopsis thaliana.</title>
        <authorList>
            <person name="Lin X."/>
            <person name="Kaul S."/>
            <person name="Rounsley S.D."/>
            <person name="Shea T.P."/>
            <person name="Benito M.-I."/>
            <person name="Town C.D."/>
            <person name="Fujii C.Y."/>
            <person name="Mason T.M."/>
            <person name="Bowman C.L."/>
            <person name="Barnstead M.E."/>
            <person name="Feldblyum T.V."/>
            <person name="Buell C.R."/>
            <person name="Ketchum K.A."/>
            <person name="Lee J.J."/>
            <person name="Ronning C.M."/>
            <person name="Koo H.L."/>
            <person name="Moffat K.S."/>
            <person name="Cronin L.A."/>
            <person name="Shen M."/>
            <person name="Pai G."/>
            <person name="Van Aken S."/>
            <person name="Umayam L."/>
            <person name="Tallon L.J."/>
            <person name="Gill J.E."/>
            <person name="Adams M.D."/>
            <person name="Carrera A.J."/>
            <person name="Creasy T.H."/>
            <person name="Goodman H.M."/>
            <person name="Somerville C.R."/>
            <person name="Copenhaver G.P."/>
            <person name="Preuss D."/>
            <person name="Nierman W.C."/>
            <person name="White O."/>
            <person name="Eisen J.A."/>
            <person name="Salzberg S.L."/>
            <person name="Fraser C.M."/>
            <person name="Venter J.C."/>
        </authorList>
    </citation>
    <scope>NUCLEOTIDE SEQUENCE [LARGE SCALE GENOMIC DNA]</scope>
    <source>
        <strain>cv. Columbia</strain>
    </source>
</reference>
<reference key="2">
    <citation type="journal article" date="2017" name="Plant J.">
        <title>Araport11: a complete reannotation of the Arabidopsis thaliana reference genome.</title>
        <authorList>
            <person name="Cheng C.Y."/>
            <person name="Krishnakumar V."/>
            <person name="Chan A.P."/>
            <person name="Thibaud-Nissen F."/>
            <person name="Schobel S."/>
            <person name="Town C.D."/>
        </authorList>
    </citation>
    <scope>GENOME REANNOTATION</scope>
    <source>
        <strain>cv. Columbia</strain>
    </source>
</reference>
<reference key="3">
    <citation type="journal article" date="2003" name="Science">
        <title>Empirical analysis of transcriptional activity in the Arabidopsis genome.</title>
        <authorList>
            <person name="Yamada K."/>
            <person name="Lim J."/>
            <person name="Dale J.M."/>
            <person name="Chen H."/>
            <person name="Shinn P."/>
            <person name="Palm C.J."/>
            <person name="Southwick A.M."/>
            <person name="Wu H.C."/>
            <person name="Kim C.J."/>
            <person name="Nguyen M."/>
            <person name="Pham P.K."/>
            <person name="Cheuk R.F."/>
            <person name="Karlin-Newmann G."/>
            <person name="Liu S.X."/>
            <person name="Lam B."/>
            <person name="Sakano H."/>
            <person name="Wu T."/>
            <person name="Yu G."/>
            <person name="Miranda M."/>
            <person name="Quach H.L."/>
            <person name="Tripp M."/>
            <person name="Chang C.H."/>
            <person name="Lee J.M."/>
            <person name="Toriumi M.J."/>
            <person name="Chan M.M."/>
            <person name="Tang C.C."/>
            <person name="Onodera C.S."/>
            <person name="Deng J.M."/>
            <person name="Akiyama K."/>
            <person name="Ansari Y."/>
            <person name="Arakawa T."/>
            <person name="Banh J."/>
            <person name="Banno F."/>
            <person name="Bowser L."/>
            <person name="Brooks S.Y."/>
            <person name="Carninci P."/>
            <person name="Chao Q."/>
            <person name="Choy N."/>
            <person name="Enju A."/>
            <person name="Goldsmith A.D."/>
            <person name="Gurjal M."/>
            <person name="Hansen N.F."/>
            <person name="Hayashizaki Y."/>
            <person name="Johnson-Hopson C."/>
            <person name="Hsuan V.W."/>
            <person name="Iida K."/>
            <person name="Karnes M."/>
            <person name="Khan S."/>
            <person name="Koesema E."/>
            <person name="Ishida J."/>
            <person name="Jiang P.X."/>
            <person name="Jones T."/>
            <person name="Kawai J."/>
            <person name="Kamiya A."/>
            <person name="Meyers C."/>
            <person name="Nakajima M."/>
            <person name="Narusaka M."/>
            <person name="Seki M."/>
            <person name="Sakurai T."/>
            <person name="Satou M."/>
            <person name="Tamse R."/>
            <person name="Vaysberg M."/>
            <person name="Wallender E.K."/>
            <person name="Wong C."/>
            <person name="Yamamura Y."/>
            <person name="Yuan S."/>
            <person name="Shinozaki K."/>
            <person name="Davis R.W."/>
            <person name="Theologis A."/>
            <person name="Ecker J.R."/>
        </authorList>
    </citation>
    <scope>NUCLEOTIDE SEQUENCE [LARGE SCALE MRNA]</scope>
    <source>
        <strain>cv. Columbia</strain>
    </source>
</reference>
<reference key="4">
    <citation type="submission" date="2006-07" db="EMBL/GenBank/DDBJ databases">
        <title>Large-scale analysis of RIKEN Arabidopsis full-length (RAFL) cDNAs.</title>
        <authorList>
            <person name="Totoki Y."/>
            <person name="Seki M."/>
            <person name="Ishida J."/>
            <person name="Nakajima M."/>
            <person name="Enju A."/>
            <person name="Kamiya A."/>
            <person name="Narusaka M."/>
            <person name="Shin-i T."/>
            <person name="Nakagawa M."/>
            <person name="Sakamoto N."/>
            <person name="Oishi K."/>
            <person name="Kohara Y."/>
            <person name="Kobayashi M."/>
            <person name="Toyoda A."/>
            <person name="Sakaki Y."/>
            <person name="Sakurai T."/>
            <person name="Iida K."/>
            <person name="Akiyama K."/>
            <person name="Satou M."/>
            <person name="Toyoda T."/>
            <person name="Konagaya A."/>
            <person name="Carninci P."/>
            <person name="Kawai J."/>
            <person name="Hayashizaki Y."/>
            <person name="Shinozaki K."/>
        </authorList>
    </citation>
    <scope>NUCLEOTIDE SEQUENCE [LARGE SCALE MRNA]</scope>
    <source>
        <strain>cv. Columbia</strain>
    </source>
</reference>
<reference key="5">
    <citation type="journal article" date="2001" name="Trends Plant Sci.">
        <title>The U-box protein family in plants.</title>
        <authorList>
            <person name="Azevedo C."/>
            <person name="Santos-Rosa M.J."/>
            <person name="Shirasu K."/>
        </authorList>
    </citation>
    <scope>GENE FAMILY ORGANIZATION</scope>
    <scope>NOMENCLATURE</scope>
</reference>
<reference key="6">
    <citation type="journal article" date="2004" name="Plant Physiol.">
        <title>A large complement of the predicted Arabidopsis ARM repeat proteins are members of the U-box E3 ubiquitin ligase family.</title>
        <authorList>
            <person name="Mudgil Y."/>
            <person name="Shiu S.-H."/>
            <person name="Stone S.L."/>
            <person name="Salt J.N."/>
            <person name="Goring D.R."/>
        </authorList>
    </citation>
    <scope>GENE FAMILY ORGANIZATION</scope>
</reference>
<organism>
    <name type="scientific">Arabidopsis thaliana</name>
    <name type="common">Mouse-ear cress</name>
    <dbReference type="NCBI Taxonomy" id="3702"/>
    <lineage>
        <taxon>Eukaryota</taxon>
        <taxon>Viridiplantae</taxon>
        <taxon>Streptophyta</taxon>
        <taxon>Embryophyta</taxon>
        <taxon>Tracheophyta</taxon>
        <taxon>Spermatophyta</taxon>
        <taxon>Magnoliopsida</taxon>
        <taxon>eudicotyledons</taxon>
        <taxon>Gunneridae</taxon>
        <taxon>Pentapetalae</taxon>
        <taxon>rosids</taxon>
        <taxon>malvids</taxon>
        <taxon>Brassicales</taxon>
        <taxon>Brassicaceae</taxon>
        <taxon>Camelineae</taxon>
        <taxon>Arabidopsis</taxon>
    </lineage>
</organism>
<protein>
    <recommendedName>
        <fullName>U-box domain-containing protein 12</fullName>
        <ecNumber>2.3.2.27</ecNumber>
    </recommendedName>
    <alternativeName>
        <fullName>Plant U-box protein 12</fullName>
    </alternativeName>
    <alternativeName>
        <fullName evidence="3">RING-type E3 ubiquitin transferase PUB12</fullName>
    </alternativeName>
</protein>
<proteinExistence type="evidence at transcript level"/>
<comment type="function">
    <text evidence="1">Functions as an E3 ubiquitin ligase.</text>
</comment>
<comment type="catalytic activity">
    <reaction>
        <text>S-ubiquitinyl-[E2 ubiquitin-conjugating enzyme]-L-cysteine + [acceptor protein]-L-lysine = [E2 ubiquitin-conjugating enzyme]-L-cysteine + N(6)-ubiquitinyl-[acceptor protein]-L-lysine.</text>
        <dbReference type="EC" id="2.3.2.27"/>
    </reaction>
</comment>
<comment type="pathway">
    <text>Protein modification; protein ubiquitination.</text>
</comment>
<comment type="sequence caution" evidence="3">
    <conflict type="erroneous gene model prediction">
        <sequence resource="EMBL-CDS" id="AEC08178"/>
    </conflict>
</comment>
<dbReference type="EC" id="2.3.2.27"/>
<dbReference type="EMBL" id="AC005727">
    <property type="protein sequence ID" value="AAC79587.1"/>
    <property type="molecule type" value="Genomic_DNA"/>
</dbReference>
<dbReference type="EMBL" id="CP002685">
    <property type="protein sequence ID" value="AEC08178.2"/>
    <property type="status" value="ALT_SEQ"/>
    <property type="molecule type" value="Genomic_DNA"/>
</dbReference>
<dbReference type="EMBL" id="AY035038">
    <property type="protein sequence ID" value="AAK59543.1"/>
    <property type="molecule type" value="mRNA"/>
</dbReference>
<dbReference type="EMBL" id="AK226821">
    <property type="protein sequence ID" value="BAE98917.1"/>
    <property type="molecule type" value="mRNA"/>
</dbReference>
<dbReference type="PIR" id="D84689">
    <property type="entry name" value="D84689"/>
</dbReference>
<dbReference type="RefSeq" id="NP_001318308.1">
    <property type="nucleotide sequence ID" value="NM_001336190.1"/>
</dbReference>
<dbReference type="SMR" id="Q9ZV31"/>
<dbReference type="STRING" id="3702.Q9ZV31"/>
<dbReference type="PaxDb" id="3702-AT2G28830.1"/>
<dbReference type="ProteomicsDB" id="226068"/>
<dbReference type="GeneID" id="817432"/>
<dbReference type="KEGG" id="ath:AT2G28830"/>
<dbReference type="Araport" id="AT2G28830"/>
<dbReference type="TAIR" id="AT2G28830"/>
<dbReference type="eggNOG" id="KOG0167">
    <property type="taxonomic scope" value="Eukaryota"/>
</dbReference>
<dbReference type="eggNOG" id="KOG0258">
    <property type="taxonomic scope" value="Eukaryota"/>
</dbReference>
<dbReference type="eggNOG" id="KOG3422">
    <property type="taxonomic scope" value="Eukaryota"/>
</dbReference>
<dbReference type="HOGENOM" id="CLU_006348_5_1_1"/>
<dbReference type="InParanoid" id="Q9ZV31"/>
<dbReference type="PhylomeDB" id="Q9ZV31"/>
<dbReference type="UniPathway" id="UPA00143"/>
<dbReference type="PRO" id="PR:Q9ZV31"/>
<dbReference type="Proteomes" id="UP000006548">
    <property type="component" value="Chromosome 2"/>
</dbReference>
<dbReference type="ExpressionAtlas" id="Q9ZV31">
    <property type="expression patterns" value="baseline and differential"/>
</dbReference>
<dbReference type="GO" id="GO:0005737">
    <property type="term" value="C:cytoplasm"/>
    <property type="evidence" value="ECO:0000318"/>
    <property type="project" value="GO_Central"/>
</dbReference>
<dbReference type="GO" id="GO:0005634">
    <property type="term" value="C:nucleus"/>
    <property type="evidence" value="ECO:0000318"/>
    <property type="project" value="GO_Central"/>
</dbReference>
<dbReference type="GO" id="GO:0004842">
    <property type="term" value="F:ubiquitin-protein transferase activity"/>
    <property type="evidence" value="ECO:0007669"/>
    <property type="project" value="InterPro"/>
</dbReference>
<dbReference type="GO" id="GO:0007166">
    <property type="term" value="P:cell surface receptor signaling pathway"/>
    <property type="evidence" value="ECO:0007669"/>
    <property type="project" value="InterPro"/>
</dbReference>
<dbReference type="GO" id="GO:0016567">
    <property type="term" value="P:protein ubiquitination"/>
    <property type="evidence" value="ECO:0007669"/>
    <property type="project" value="UniProtKB-UniPathway"/>
</dbReference>
<dbReference type="CDD" id="cd16664">
    <property type="entry name" value="RING-Ubox_PUB"/>
    <property type="match status" value="1"/>
</dbReference>
<dbReference type="FunFam" id="1.20.930.20:FF:000002">
    <property type="entry name" value="RING-type E3 ubiquitin transferase"/>
    <property type="match status" value="1"/>
</dbReference>
<dbReference type="FunFam" id="1.25.10.10:FF:000082">
    <property type="entry name" value="RING-type E3 ubiquitin transferase"/>
    <property type="match status" value="1"/>
</dbReference>
<dbReference type="FunFam" id="3.30.40.10:FF:000114">
    <property type="entry name" value="RING-type E3 ubiquitin transferase"/>
    <property type="match status" value="1"/>
</dbReference>
<dbReference type="Gene3D" id="1.20.930.20">
    <property type="entry name" value="Adaptor protein Cbl, N-terminal domain"/>
    <property type="match status" value="1"/>
</dbReference>
<dbReference type="Gene3D" id="1.25.10.10">
    <property type="entry name" value="Leucine-rich Repeat Variant"/>
    <property type="match status" value="1"/>
</dbReference>
<dbReference type="Gene3D" id="3.30.40.10">
    <property type="entry name" value="Zinc/RING finger domain, C3HC4 (zinc finger)"/>
    <property type="match status" value="1"/>
</dbReference>
<dbReference type="InterPro" id="IPR036537">
    <property type="entry name" value="Adaptor_Cbl_N_dom_sf"/>
</dbReference>
<dbReference type="InterPro" id="IPR011989">
    <property type="entry name" value="ARM-like"/>
</dbReference>
<dbReference type="InterPro" id="IPR016024">
    <property type="entry name" value="ARM-type_fold"/>
</dbReference>
<dbReference type="InterPro" id="IPR000225">
    <property type="entry name" value="Armadillo"/>
</dbReference>
<dbReference type="InterPro" id="IPR045210">
    <property type="entry name" value="RING-Ubox_PUB"/>
</dbReference>
<dbReference type="InterPro" id="IPR003613">
    <property type="entry name" value="Ubox_domain"/>
</dbReference>
<dbReference type="InterPro" id="IPR013083">
    <property type="entry name" value="Znf_RING/FYVE/PHD"/>
</dbReference>
<dbReference type="PANTHER" id="PTHR23315">
    <property type="entry name" value="U BOX DOMAIN-CONTAINING"/>
    <property type="match status" value="1"/>
</dbReference>
<dbReference type="PANTHER" id="PTHR23315:SF336">
    <property type="entry name" value="U-BOX DOMAIN-CONTAINING PROTEIN 12"/>
    <property type="match status" value="1"/>
</dbReference>
<dbReference type="Pfam" id="PF00514">
    <property type="entry name" value="Arm"/>
    <property type="match status" value="3"/>
</dbReference>
<dbReference type="Pfam" id="PF25368">
    <property type="entry name" value="PUB10_N"/>
    <property type="match status" value="1"/>
</dbReference>
<dbReference type="Pfam" id="PF04564">
    <property type="entry name" value="U-box"/>
    <property type="match status" value="1"/>
</dbReference>
<dbReference type="SMART" id="SM00185">
    <property type="entry name" value="ARM"/>
    <property type="match status" value="6"/>
</dbReference>
<dbReference type="SMART" id="SM00504">
    <property type="entry name" value="Ubox"/>
    <property type="match status" value="1"/>
</dbReference>
<dbReference type="SUPFAM" id="SSF48371">
    <property type="entry name" value="ARM repeat"/>
    <property type="match status" value="1"/>
</dbReference>
<dbReference type="SUPFAM" id="SSF57850">
    <property type="entry name" value="RING/U-box"/>
    <property type="match status" value="1"/>
</dbReference>
<dbReference type="PROSITE" id="PS50176">
    <property type="entry name" value="ARM_REPEAT"/>
    <property type="match status" value="2"/>
</dbReference>
<dbReference type="PROSITE" id="PS51698">
    <property type="entry name" value="U_BOX"/>
    <property type="match status" value="1"/>
</dbReference>
<gene>
    <name type="primary">PUB12</name>
    <name type="ordered locus">At2g28830</name>
    <name type="ORF">F8N16.12</name>
</gene>
<sequence>MAKSEKHKLAQTLIDSINEIASISDSVTPMKKHCANLSRRLSLLLPMLEEIRDNQESSSEVVNALLSVKQSLLHAKDLLSFVSHVSKIYLVLERDQVMVKFQKVTSLLEQALSIIPYENLEISDELKEQVELVLVQLRRSLGKRGGDVYDDELYKDVLSLYSGRGSVMESDMVRRVAEKLQLMTITDLTQESLALLDMVSSSGGDDPGESFEKMSMVLKKIKDFVQTYNPNLDDAPLRLKSSLPKSRDDDRDMLIPPEEFRCPISLELMTDPVIVSSGQTYERECIKKWLEGGHLTCPKTQETLTSDIMTPNYVLRSLIAQWCESNGIEPPKRPNISQPSSKASSSSSAPDDEHNKIEELLLKLTSQQPEDRRSAAGEIRLLAKQNNHNRVAIAASGAIPLLVNLLTISNDSRTQEHAVTSILNLSICQENKGKIVYSSGAVPGIVHVLQKGSMEARENAAATLFSLSVIDENKVTIGAAGAIPPLVTLLSEGSQRGKKDAATALFNLCIFQGNKGKAVRAGLVPVLMRLLTEPESGMVDESLSILAILSSHPDGKSEVGAADAVPVLVDFIRSGSPRNKENSAAVLVHLCSWNQQHLIEAQKLGIMDLLIEMAENGTDRGKRKAAQLLNRFSRFNDQQKQHSGLGLEDQISLI</sequence>
<keyword id="KW-1185">Reference proteome</keyword>
<keyword id="KW-0677">Repeat</keyword>
<keyword id="KW-0808">Transferase</keyword>
<keyword id="KW-0833">Ubl conjugation pathway</keyword>
<name>PUB12_ARATH</name>
<accession>Q9ZV31</accession>
<accession>F4IJM7</accession>
<accession>Q94C99</accession>
<evidence type="ECO:0000250" key="1"/>
<evidence type="ECO:0000256" key="2">
    <source>
        <dbReference type="SAM" id="MobiDB-lite"/>
    </source>
</evidence>
<evidence type="ECO:0000305" key="3"/>
<feature type="chain" id="PRO_0000322157" description="U-box domain-containing protein 12">
    <location>
        <begin position="1"/>
        <end position="654"/>
    </location>
</feature>
<feature type="domain" description="U-box">
    <location>
        <begin position="255"/>
        <end position="329"/>
    </location>
</feature>
<feature type="repeat" description="ARM 1">
    <location>
        <begin position="387"/>
        <end position="427"/>
    </location>
</feature>
<feature type="repeat" description="ARM 2">
    <location>
        <begin position="430"/>
        <end position="469"/>
    </location>
</feature>
<feature type="repeat" description="ARM 3">
    <location>
        <begin position="471"/>
        <end position="510"/>
    </location>
</feature>
<feature type="repeat" description="ARM 4">
    <location>
        <begin position="512"/>
        <end position="551"/>
    </location>
</feature>
<feature type="repeat" description="ARM 5">
    <location>
        <begin position="553"/>
        <end position="592"/>
    </location>
</feature>
<feature type="region of interest" description="Disordered" evidence="2">
    <location>
        <begin position="329"/>
        <end position="352"/>
    </location>
</feature>
<feature type="compositionally biased region" description="Low complexity" evidence="2">
    <location>
        <begin position="337"/>
        <end position="349"/>
    </location>
</feature>
<feature type="sequence conflict" description="In Ref. 3; AAK59543." evidence="3" ref="3">
    <original>R</original>
    <variation>K</variation>
    <location>
        <position position="373"/>
    </location>
</feature>